<keyword id="KW-0968">Cytoplasmic vesicle</keyword>
<keyword id="KW-0325">Glycoprotein</keyword>
<keyword id="KW-0333">Golgi apparatus</keyword>
<keyword id="KW-0472">Membrane</keyword>
<keyword id="KW-0597">Phosphoprotein</keyword>
<keyword id="KW-1185">Reference proteome</keyword>
<keyword id="KW-0762">Sugar transport</keyword>
<keyword id="KW-0812">Transmembrane</keyword>
<keyword id="KW-1133">Transmembrane helix</keyword>
<keyword id="KW-0813">Transport</keyword>
<evidence type="ECO:0000255" key="1"/>
<evidence type="ECO:0000269" key="2">
    <source>
    </source>
</evidence>
<evidence type="ECO:0000305" key="3"/>
<evidence type="ECO:0007744" key="4">
    <source>
    </source>
</evidence>
<accession>Q03697</accession>
<accession>D6VZD7</accession>
<protein>
    <recommendedName>
        <fullName>Putative nucleotide-sugar transporter YMD8</fullName>
    </recommendedName>
</protein>
<comment type="subcellular location">
    <subcellularLocation>
        <location evidence="2">Golgi apparatus membrane</location>
        <topology evidence="2">Multi-pass membrane protein</topology>
    </subcellularLocation>
    <subcellularLocation>
        <location evidence="2">Cytoplasmic vesicle</location>
        <location evidence="2">COPI-coated vesicle membrane</location>
        <topology evidence="2">Multi-pass membrane protein</topology>
    </subcellularLocation>
</comment>
<comment type="similarity">
    <text evidence="3">Belongs to the TPT transporter family. SLC35C subfamily.</text>
</comment>
<name>YMD8_YEAST</name>
<dbReference type="EMBL" id="Z46659">
    <property type="protein sequence ID" value="CAA86617.1"/>
    <property type="molecule type" value="Genomic_DNA"/>
</dbReference>
<dbReference type="EMBL" id="AY692787">
    <property type="protein sequence ID" value="AAT92806.1"/>
    <property type="molecule type" value="Genomic_DNA"/>
</dbReference>
<dbReference type="EMBL" id="BK006946">
    <property type="protein sequence ID" value="DAA09861.1"/>
    <property type="molecule type" value="Genomic_DNA"/>
</dbReference>
<dbReference type="PIR" id="S49741">
    <property type="entry name" value="S49741"/>
</dbReference>
<dbReference type="RefSeq" id="NP_013674.1">
    <property type="nucleotide sequence ID" value="NM_001182396.1"/>
</dbReference>
<dbReference type="SMR" id="Q03697"/>
<dbReference type="BioGRID" id="35132">
    <property type="interactions" value="134"/>
</dbReference>
<dbReference type="DIP" id="DIP-1312N"/>
<dbReference type="FunCoup" id="Q03697">
    <property type="interactions" value="807"/>
</dbReference>
<dbReference type="IntAct" id="Q03697">
    <property type="interactions" value="11"/>
</dbReference>
<dbReference type="MINT" id="Q03697"/>
<dbReference type="STRING" id="4932.YML038C"/>
<dbReference type="TCDB" id="2.A.7.9.14">
    <property type="family name" value="the drug/metabolite transporter (dmt) superfamily"/>
</dbReference>
<dbReference type="GlyCosmos" id="Q03697">
    <property type="glycosylation" value="1 site, No reported glycans"/>
</dbReference>
<dbReference type="GlyGen" id="Q03697">
    <property type="glycosylation" value="1 site"/>
</dbReference>
<dbReference type="iPTMnet" id="Q03697"/>
<dbReference type="PaxDb" id="4932-YML038C"/>
<dbReference type="PeptideAtlas" id="Q03697"/>
<dbReference type="EnsemblFungi" id="YML038C_mRNA">
    <property type="protein sequence ID" value="YML038C"/>
    <property type="gene ID" value="YML038C"/>
</dbReference>
<dbReference type="GeneID" id="854970"/>
<dbReference type="KEGG" id="sce:YML038C"/>
<dbReference type="AGR" id="SGD:S000004502"/>
<dbReference type="SGD" id="S000004502">
    <property type="gene designation" value="YMD8"/>
</dbReference>
<dbReference type="VEuPathDB" id="FungiDB:YML038C"/>
<dbReference type="eggNOG" id="KOG1443">
    <property type="taxonomic scope" value="Eukaryota"/>
</dbReference>
<dbReference type="GeneTree" id="ENSGT00510000048078"/>
<dbReference type="HOGENOM" id="CLU_022332_1_1_1"/>
<dbReference type="InParanoid" id="Q03697"/>
<dbReference type="OMA" id="WLMKSFP"/>
<dbReference type="OrthoDB" id="18894at2759"/>
<dbReference type="BioCyc" id="YEAST:G3O-32637-MONOMER"/>
<dbReference type="BioGRID-ORCS" id="854970">
    <property type="hits" value="0 hits in 10 CRISPR screens"/>
</dbReference>
<dbReference type="PRO" id="PR:Q03697"/>
<dbReference type="Proteomes" id="UP000002311">
    <property type="component" value="Chromosome XIII"/>
</dbReference>
<dbReference type="RNAct" id="Q03697">
    <property type="molecule type" value="protein"/>
</dbReference>
<dbReference type="GO" id="GO:0005801">
    <property type="term" value="C:cis-Golgi network"/>
    <property type="evidence" value="ECO:0000318"/>
    <property type="project" value="GO_Central"/>
</dbReference>
<dbReference type="GO" id="GO:0030137">
    <property type="term" value="C:COPI-coated vesicle"/>
    <property type="evidence" value="ECO:0007005"/>
    <property type="project" value="SGD"/>
</dbReference>
<dbReference type="GO" id="GO:0030663">
    <property type="term" value="C:COPI-coated vesicle membrane"/>
    <property type="evidence" value="ECO:0007669"/>
    <property type="project" value="UniProtKB-SubCell"/>
</dbReference>
<dbReference type="GO" id="GO:0005793">
    <property type="term" value="C:endoplasmic reticulum-Golgi intermediate compartment"/>
    <property type="evidence" value="ECO:0000318"/>
    <property type="project" value="GO_Central"/>
</dbReference>
<dbReference type="GO" id="GO:0005794">
    <property type="term" value="C:Golgi apparatus"/>
    <property type="evidence" value="ECO:0000318"/>
    <property type="project" value="GO_Central"/>
</dbReference>
<dbReference type="GO" id="GO:0000139">
    <property type="term" value="C:Golgi membrane"/>
    <property type="evidence" value="ECO:0007669"/>
    <property type="project" value="UniProtKB-SubCell"/>
</dbReference>
<dbReference type="GO" id="GO:0015297">
    <property type="term" value="F:antiporter activity"/>
    <property type="evidence" value="ECO:0000318"/>
    <property type="project" value="GO_Central"/>
</dbReference>
<dbReference type="GO" id="GO:0005338">
    <property type="term" value="F:nucleotide-sugar transmembrane transporter activity"/>
    <property type="evidence" value="ECO:0000250"/>
    <property type="project" value="SGD"/>
</dbReference>
<dbReference type="GO" id="GO:0015780">
    <property type="term" value="P:nucleotide-sugar transmembrane transport"/>
    <property type="evidence" value="ECO:0000250"/>
    <property type="project" value="SGD"/>
</dbReference>
<dbReference type="GO" id="GO:0015786">
    <property type="term" value="P:UDP-glucose transmembrane transport"/>
    <property type="evidence" value="ECO:0000315"/>
    <property type="project" value="SGD"/>
</dbReference>
<dbReference type="InterPro" id="IPR013657">
    <property type="entry name" value="SCL35B1-4/HUT1"/>
</dbReference>
<dbReference type="InterPro" id="IPR050186">
    <property type="entry name" value="TPT_transporter"/>
</dbReference>
<dbReference type="PANTHER" id="PTHR11132">
    <property type="entry name" value="SOLUTE CARRIER FAMILY 35"/>
    <property type="match status" value="1"/>
</dbReference>
<dbReference type="Pfam" id="PF08449">
    <property type="entry name" value="UAA"/>
    <property type="match status" value="1"/>
</dbReference>
<dbReference type="SUPFAM" id="SSF103481">
    <property type="entry name" value="Multidrug resistance efflux transporter EmrE"/>
    <property type="match status" value="2"/>
</dbReference>
<sequence>MNRTVFLAFVFGWYFCSIALSIYNRWMFDPKDGLGIGYPVLVTTFHQATLWLLSGIYIKLRHKPVKNVLRKNNGFNWSFFLKFLLPTAVASAGDIGLSNVSFQYVPLTIYTIIKSSSIAFVLLFGCIFKLEKFHWKLALSVIIMFVGVALMVFKPSDSTSTKNDQALVIFGSFLVLASSCLSGLRWVYTQLMLRNNPIQTNTAAAVEESDGALFTENEDNVDNEPVVNLANNKMLENFGESKPHPIHTIHQLAPIMGITLLLTSLLVEKPFPGIFSSSIFRLDTSNGGVGTETTVLSIVRGIVLLILPGFAVFLLTICEFSILEQTPVLTVSIVGIVKELLTVIFGIIILSERLSGFYNWLGMLIIMADVCYYNYFRYKQDLLQKYHSVSTQDNRNELKGFQDFEQLGSKKIAPYSISVDLTNQEYELDMIAQNVSRSSQQV</sequence>
<reference key="1">
    <citation type="journal article" date="1997" name="Nature">
        <title>The nucleotide sequence of Saccharomyces cerevisiae chromosome XIII.</title>
        <authorList>
            <person name="Bowman S."/>
            <person name="Churcher C.M."/>
            <person name="Badcock K."/>
            <person name="Brown D."/>
            <person name="Chillingworth T."/>
            <person name="Connor R."/>
            <person name="Dedman K."/>
            <person name="Devlin K."/>
            <person name="Gentles S."/>
            <person name="Hamlin N."/>
            <person name="Hunt S."/>
            <person name="Jagels K."/>
            <person name="Lye G."/>
            <person name="Moule S."/>
            <person name="Odell C."/>
            <person name="Pearson D."/>
            <person name="Rajandream M.A."/>
            <person name="Rice P."/>
            <person name="Skelton J."/>
            <person name="Walsh S.V."/>
            <person name="Whitehead S."/>
            <person name="Barrell B.G."/>
        </authorList>
    </citation>
    <scope>NUCLEOTIDE SEQUENCE [LARGE SCALE GENOMIC DNA]</scope>
    <source>
        <strain>ATCC 204508 / S288c</strain>
    </source>
</reference>
<reference key="2">
    <citation type="journal article" date="2014" name="G3 (Bethesda)">
        <title>The reference genome sequence of Saccharomyces cerevisiae: Then and now.</title>
        <authorList>
            <person name="Engel S.R."/>
            <person name="Dietrich F.S."/>
            <person name="Fisk D.G."/>
            <person name="Binkley G."/>
            <person name="Balakrishnan R."/>
            <person name="Costanzo M.C."/>
            <person name="Dwight S.S."/>
            <person name="Hitz B.C."/>
            <person name="Karra K."/>
            <person name="Nash R.S."/>
            <person name="Weng S."/>
            <person name="Wong E.D."/>
            <person name="Lloyd P."/>
            <person name="Skrzypek M.S."/>
            <person name="Miyasato S.R."/>
            <person name="Simison M."/>
            <person name="Cherry J.M."/>
        </authorList>
    </citation>
    <scope>GENOME REANNOTATION</scope>
    <source>
        <strain>ATCC 204508 / S288c</strain>
    </source>
</reference>
<reference key="3">
    <citation type="journal article" date="2007" name="Genome Res.">
        <title>Approaching a complete repository of sequence-verified protein-encoding clones for Saccharomyces cerevisiae.</title>
        <authorList>
            <person name="Hu Y."/>
            <person name="Rolfs A."/>
            <person name="Bhullar B."/>
            <person name="Murthy T.V.S."/>
            <person name="Zhu C."/>
            <person name="Berger M.F."/>
            <person name="Camargo A.A."/>
            <person name="Kelley F."/>
            <person name="McCarron S."/>
            <person name="Jepson D."/>
            <person name="Richardson A."/>
            <person name="Raphael J."/>
            <person name="Moreira D."/>
            <person name="Taycher E."/>
            <person name="Zuo D."/>
            <person name="Mohr S."/>
            <person name="Kane M.F."/>
            <person name="Williamson J."/>
            <person name="Simpson A.J.G."/>
            <person name="Bulyk M.L."/>
            <person name="Harlow E."/>
            <person name="Marsischky G."/>
            <person name="Kolodner R.D."/>
            <person name="LaBaer J."/>
        </authorList>
    </citation>
    <scope>NUCLEOTIDE SEQUENCE [GENOMIC DNA]</scope>
    <source>
        <strain>ATCC 204508 / S288c</strain>
    </source>
</reference>
<reference key="4">
    <citation type="journal article" date="2003" name="Nature">
        <title>Global analysis of protein localization in budding yeast.</title>
        <authorList>
            <person name="Huh W.-K."/>
            <person name="Falvo J.V."/>
            <person name="Gerke L.C."/>
            <person name="Carroll A.S."/>
            <person name="Howson R.W."/>
            <person name="Weissman J.S."/>
            <person name="O'Shea E.K."/>
        </authorList>
    </citation>
    <scope>SUBCELLULAR LOCATION [LARGE SCALE ANALYSIS]</scope>
</reference>
<reference key="5">
    <citation type="journal article" date="2006" name="Proc. Natl. Acad. Sci. U.S.A.">
        <title>A global topology map of the Saccharomyces cerevisiae membrane proteome.</title>
        <authorList>
            <person name="Kim H."/>
            <person name="Melen K."/>
            <person name="Oesterberg M."/>
            <person name="von Heijne G."/>
        </authorList>
    </citation>
    <scope>TOPOLOGY [LARGE SCALE ANALYSIS]</scope>
    <source>
        <strain>ATCC 208353 / W303-1A</strain>
    </source>
</reference>
<reference key="6">
    <citation type="journal article" date="2009" name="Science">
        <title>Global analysis of Cdk1 substrate phosphorylation sites provides insights into evolution.</title>
        <authorList>
            <person name="Holt L.J."/>
            <person name="Tuch B.B."/>
            <person name="Villen J."/>
            <person name="Johnson A.D."/>
            <person name="Gygi S.P."/>
            <person name="Morgan D.O."/>
        </authorList>
    </citation>
    <scope>PHOSPHORYLATION [LARGE SCALE ANALYSIS] AT SER-209</scope>
    <scope>IDENTIFICATION BY MASS SPECTROMETRY [LARGE SCALE ANALYSIS]</scope>
</reference>
<feature type="chain" id="PRO_0000213402" description="Putative nucleotide-sugar transporter YMD8">
    <location>
        <begin position="1"/>
        <end position="442"/>
    </location>
</feature>
<feature type="topological domain" description="Cytoplasmic" evidence="1">
    <location>
        <begin position="1"/>
        <end position="3"/>
    </location>
</feature>
<feature type="transmembrane region" description="Helical" evidence="1">
    <location>
        <begin position="4"/>
        <end position="24"/>
    </location>
</feature>
<feature type="topological domain" description="Extracellular" evidence="1">
    <location>
        <begin position="25"/>
        <end position="32"/>
    </location>
</feature>
<feature type="transmembrane region" description="Helical" evidence="1">
    <location>
        <begin position="33"/>
        <end position="53"/>
    </location>
</feature>
<feature type="topological domain" description="Cytoplasmic" evidence="1">
    <location>
        <begin position="54"/>
        <end position="76"/>
    </location>
</feature>
<feature type="transmembrane region" description="Helical" evidence="1">
    <location>
        <begin position="77"/>
        <end position="97"/>
    </location>
</feature>
<feature type="topological domain" description="Extracellular" evidence="1">
    <location>
        <begin position="98"/>
        <end position="107"/>
    </location>
</feature>
<feature type="transmembrane region" description="Helical" evidence="1">
    <location>
        <begin position="108"/>
        <end position="128"/>
    </location>
</feature>
<feature type="topological domain" description="Cytoplasmic" evidence="1">
    <location>
        <begin position="129"/>
        <end position="132"/>
    </location>
</feature>
<feature type="transmembrane region" description="Helical" evidence="1">
    <location>
        <begin position="133"/>
        <end position="153"/>
    </location>
</feature>
<feature type="topological domain" description="Extracellular" evidence="1">
    <location>
        <begin position="154"/>
        <end position="166"/>
    </location>
</feature>
<feature type="transmembrane region" description="Helical" evidence="1">
    <location>
        <begin position="167"/>
        <end position="187"/>
    </location>
</feature>
<feature type="topological domain" description="Cytoplasmic" evidence="1">
    <location>
        <begin position="188"/>
        <end position="254"/>
    </location>
</feature>
<feature type="transmembrane region" description="Helical" evidence="1">
    <location>
        <begin position="255"/>
        <end position="275"/>
    </location>
</feature>
<feature type="topological domain" description="Extracellular" evidence="1">
    <location>
        <begin position="276"/>
        <end position="301"/>
    </location>
</feature>
<feature type="transmembrane region" description="Helical" evidence="1">
    <location>
        <begin position="302"/>
        <end position="322"/>
    </location>
</feature>
<feature type="topological domain" description="Cytoplasmic" evidence="1">
    <location>
        <begin position="323"/>
        <end position="329"/>
    </location>
</feature>
<feature type="transmembrane region" description="Helical" evidence="1">
    <location>
        <begin position="330"/>
        <end position="350"/>
    </location>
</feature>
<feature type="topological domain" description="Extracellular" evidence="1">
    <location>
        <begin position="351"/>
        <end position="355"/>
    </location>
</feature>
<feature type="transmembrane region" description="Helical" evidence="1">
    <location>
        <begin position="356"/>
        <end position="376"/>
    </location>
</feature>
<feature type="topological domain" description="Cytoplasmic" evidence="1">
    <location>
        <begin position="377"/>
        <end position="442"/>
    </location>
</feature>
<feature type="modified residue" description="Phosphoserine" evidence="4">
    <location>
        <position position="209"/>
    </location>
</feature>
<feature type="glycosylation site" description="N-linked (GlcNAc...) asparagine" evidence="1">
    <location>
        <position position="99"/>
    </location>
</feature>
<organism>
    <name type="scientific">Saccharomyces cerevisiae (strain ATCC 204508 / S288c)</name>
    <name type="common">Baker's yeast</name>
    <dbReference type="NCBI Taxonomy" id="559292"/>
    <lineage>
        <taxon>Eukaryota</taxon>
        <taxon>Fungi</taxon>
        <taxon>Dikarya</taxon>
        <taxon>Ascomycota</taxon>
        <taxon>Saccharomycotina</taxon>
        <taxon>Saccharomycetes</taxon>
        <taxon>Saccharomycetales</taxon>
        <taxon>Saccharomycetaceae</taxon>
        <taxon>Saccharomyces</taxon>
    </lineage>
</organism>
<gene>
    <name type="primary">YMD8</name>
    <name type="ordered locus">YML038C</name>
</gene>
<proteinExistence type="evidence at protein level"/>